<dbReference type="EC" id="2.4.99.17" evidence="1"/>
<dbReference type="EMBL" id="CP000471">
    <property type="protein sequence ID" value="ABK43122.1"/>
    <property type="molecule type" value="Genomic_DNA"/>
</dbReference>
<dbReference type="RefSeq" id="WP_011712289.1">
    <property type="nucleotide sequence ID" value="NC_008576.1"/>
</dbReference>
<dbReference type="SMR" id="A0L579"/>
<dbReference type="STRING" id="156889.Mmc1_0601"/>
<dbReference type="KEGG" id="mgm:Mmc1_0601"/>
<dbReference type="eggNOG" id="COG0809">
    <property type="taxonomic scope" value="Bacteria"/>
</dbReference>
<dbReference type="HOGENOM" id="CLU_039110_1_0_5"/>
<dbReference type="OrthoDB" id="9805933at2"/>
<dbReference type="UniPathway" id="UPA00392"/>
<dbReference type="Proteomes" id="UP000002586">
    <property type="component" value="Chromosome"/>
</dbReference>
<dbReference type="GO" id="GO:0005737">
    <property type="term" value="C:cytoplasm"/>
    <property type="evidence" value="ECO:0007669"/>
    <property type="project" value="UniProtKB-SubCell"/>
</dbReference>
<dbReference type="GO" id="GO:0051075">
    <property type="term" value="F:S-adenosylmethionine:tRNA ribosyltransferase-isomerase activity"/>
    <property type="evidence" value="ECO:0007669"/>
    <property type="project" value="UniProtKB-EC"/>
</dbReference>
<dbReference type="GO" id="GO:0008616">
    <property type="term" value="P:queuosine biosynthetic process"/>
    <property type="evidence" value="ECO:0007669"/>
    <property type="project" value="UniProtKB-UniRule"/>
</dbReference>
<dbReference type="GO" id="GO:0002099">
    <property type="term" value="P:tRNA wobble guanine modification"/>
    <property type="evidence" value="ECO:0007669"/>
    <property type="project" value="TreeGrafter"/>
</dbReference>
<dbReference type="FunFam" id="3.40.1780.10:FF:000001">
    <property type="entry name" value="S-adenosylmethionine:tRNA ribosyltransferase-isomerase"/>
    <property type="match status" value="1"/>
</dbReference>
<dbReference type="Gene3D" id="2.40.10.240">
    <property type="entry name" value="QueA-like"/>
    <property type="match status" value="1"/>
</dbReference>
<dbReference type="Gene3D" id="3.40.1780.10">
    <property type="entry name" value="QueA-like"/>
    <property type="match status" value="2"/>
</dbReference>
<dbReference type="HAMAP" id="MF_00113">
    <property type="entry name" value="QueA"/>
    <property type="match status" value="1"/>
</dbReference>
<dbReference type="InterPro" id="IPR003699">
    <property type="entry name" value="QueA"/>
</dbReference>
<dbReference type="InterPro" id="IPR042118">
    <property type="entry name" value="QueA_dom1"/>
</dbReference>
<dbReference type="InterPro" id="IPR042119">
    <property type="entry name" value="QueA_dom2"/>
</dbReference>
<dbReference type="InterPro" id="IPR036100">
    <property type="entry name" value="QueA_sf"/>
</dbReference>
<dbReference type="NCBIfam" id="NF001140">
    <property type="entry name" value="PRK00147.1"/>
    <property type="match status" value="1"/>
</dbReference>
<dbReference type="NCBIfam" id="TIGR00113">
    <property type="entry name" value="queA"/>
    <property type="match status" value="1"/>
</dbReference>
<dbReference type="PANTHER" id="PTHR30307">
    <property type="entry name" value="S-ADENOSYLMETHIONINE:TRNA RIBOSYLTRANSFERASE-ISOMERASE"/>
    <property type="match status" value="1"/>
</dbReference>
<dbReference type="PANTHER" id="PTHR30307:SF0">
    <property type="entry name" value="S-ADENOSYLMETHIONINE:TRNA RIBOSYLTRANSFERASE-ISOMERASE"/>
    <property type="match status" value="1"/>
</dbReference>
<dbReference type="Pfam" id="PF02547">
    <property type="entry name" value="Queuosine_synth"/>
    <property type="match status" value="1"/>
</dbReference>
<dbReference type="SUPFAM" id="SSF111337">
    <property type="entry name" value="QueA-like"/>
    <property type="match status" value="1"/>
</dbReference>
<keyword id="KW-0963">Cytoplasm</keyword>
<keyword id="KW-0671">Queuosine biosynthesis</keyword>
<keyword id="KW-1185">Reference proteome</keyword>
<keyword id="KW-0949">S-adenosyl-L-methionine</keyword>
<keyword id="KW-0808">Transferase</keyword>
<proteinExistence type="inferred from homology"/>
<evidence type="ECO:0000255" key="1">
    <source>
        <dbReference type="HAMAP-Rule" id="MF_00113"/>
    </source>
</evidence>
<reference key="1">
    <citation type="journal article" date="2009" name="Appl. Environ. Microbiol.">
        <title>Complete genome sequence of the chemolithoautotrophic marine magnetotactic coccus strain MC-1.</title>
        <authorList>
            <person name="Schubbe S."/>
            <person name="Williams T.J."/>
            <person name="Xie G."/>
            <person name="Kiss H.E."/>
            <person name="Brettin T.S."/>
            <person name="Martinez D."/>
            <person name="Ross C.A."/>
            <person name="Schuler D."/>
            <person name="Cox B.L."/>
            <person name="Nealson K.H."/>
            <person name="Bazylinski D.A."/>
        </authorList>
    </citation>
    <scope>NUCLEOTIDE SEQUENCE [LARGE SCALE GENOMIC DNA]</scope>
    <source>
        <strain>ATCC BAA-1437 / JCM 17883 / MC-1</strain>
    </source>
</reference>
<sequence length="363" mass="40421">MNGTSFFGGDGTRLSHYDYDLPAAHIAQRPMEPRDHARLLVSRAQGVEDSRFDQLVEHLQAGDLLVLNDTKVIPARLLGHKPSGGRVEIFLLKPDPQHPPLWRAMTRSNKPLKVGQRVEFGEDFYAELVERQAEGHVLVALHAVGMGLDEAMQHYGQMPLPPYISGSDAQQDKSRYQTVFARRDGAVAAPTAGLHFTDALFERLAAKGVTWCHVTLHVGLGTFQPVRVEDLDAHPMHGEWRQLEADAVAKIQRTKAAGGRVVAVGTTAVRTLESSVDDQGVLQASCGETRLFIRPGYRFKVVDLMLTNFHLPKSTLLMLVAAFVGRSRLRRDYAHAMGKNYRFYSYGDTTLLYPQLEEERGLS</sequence>
<comment type="function">
    <text evidence="1">Transfers and isomerizes the ribose moiety from AdoMet to the 7-aminomethyl group of 7-deazaguanine (preQ1-tRNA) to give epoxyqueuosine (oQ-tRNA).</text>
</comment>
<comment type="catalytic activity">
    <reaction evidence="1">
        <text>7-aminomethyl-7-carbaguanosine(34) in tRNA + S-adenosyl-L-methionine = epoxyqueuosine(34) in tRNA + adenine + L-methionine + 2 H(+)</text>
        <dbReference type="Rhea" id="RHEA:32155"/>
        <dbReference type="Rhea" id="RHEA-COMP:10342"/>
        <dbReference type="Rhea" id="RHEA-COMP:18582"/>
        <dbReference type="ChEBI" id="CHEBI:15378"/>
        <dbReference type="ChEBI" id="CHEBI:16708"/>
        <dbReference type="ChEBI" id="CHEBI:57844"/>
        <dbReference type="ChEBI" id="CHEBI:59789"/>
        <dbReference type="ChEBI" id="CHEBI:82833"/>
        <dbReference type="ChEBI" id="CHEBI:194443"/>
        <dbReference type="EC" id="2.4.99.17"/>
    </reaction>
</comment>
<comment type="pathway">
    <text evidence="1">tRNA modification; tRNA-queuosine biosynthesis.</text>
</comment>
<comment type="subunit">
    <text evidence="1">Monomer.</text>
</comment>
<comment type="subcellular location">
    <subcellularLocation>
        <location evidence="1">Cytoplasm</location>
    </subcellularLocation>
</comment>
<comment type="similarity">
    <text evidence="1">Belongs to the QueA family.</text>
</comment>
<protein>
    <recommendedName>
        <fullName evidence="1">S-adenosylmethionine:tRNA ribosyltransferase-isomerase</fullName>
        <ecNumber evidence="1">2.4.99.17</ecNumber>
    </recommendedName>
    <alternativeName>
        <fullName evidence="1">Queuosine biosynthesis protein QueA</fullName>
    </alternativeName>
</protein>
<gene>
    <name evidence="1" type="primary">queA</name>
    <name type="ordered locus">Mmc1_0601</name>
</gene>
<name>QUEA_MAGMM</name>
<accession>A0L579</accession>
<organism>
    <name type="scientific">Magnetococcus marinus (strain ATCC BAA-1437 / JCM 17883 / MC-1)</name>
    <dbReference type="NCBI Taxonomy" id="156889"/>
    <lineage>
        <taxon>Bacteria</taxon>
        <taxon>Pseudomonadati</taxon>
        <taxon>Pseudomonadota</taxon>
        <taxon>Alphaproteobacteria</taxon>
        <taxon>Magnetococcales</taxon>
        <taxon>Magnetococcaceae</taxon>
        <taxon>Magnetococcus</taxon>
    </lineage>
</organism>
<feature type="chain" id="PRO_1000202956" description="S-adenosylmethionine:tRNA ribosyltransferase-isomerase">
    <location>
        <begin position="1"/>
        <end position="363"/>
    </location>
</feature>